<proteinExistence type="inferred from homology"/>
<name>SYP_LEGPA</name>
<keyword id="KW-0030">Aminoacyl-tRNA synthetase</keyword>
<keyword id="KW-0067">ATP-binding</keyword>
<keyword id="KW-0963">Cytoplasm</keyword>
<keyword id="KW-0436">Ligase</keyword>
<keyword id="KW-0547">Nucleotide-binding</keyword>
<keyword id="KW-0648">Protein biosynthesis</keyword>
<feature type="chain" id="PRO_0000248713" description="Proline--tRNA ligase">
    <location>
        <begin position="1"/>
        <end position="569"/>
    </location>
</feature>
<reference key="1">
    <citation type="journal article" date="2004" name="Nat. Genet.">
        <title>Evidence in the Legionella pneumophila genome for exploitation of host cell functions and high genome plasticity.</title>
        <authorList>
            <person name="Cazalet C."/>
            <person name="Rusniok C."/>
            <person name="Brueggemann H."/>
            <person name="Zidane N."/>
            <person name="Magnier A."/>
            <person name="Ma L."/>
            <person name="Tichit M."/>
            <person name="Jarraud S."/>
            <person name="Bouchier C."/>
            <person name="Vandenesch F."/>
            <person name="Kunst F."/>
            <person name="Etienne J."/>
            <person name="Glaser P."/>
            <person name="Buchrieser C."/>
        </authorList>
    </citation>
    <scope>NUCLEOTIDE SEQUENCE [LARGE SCALE GENOMIC DNA]</scope>
    <source>
        <strain>Paris</strain>
    </source>
</reference>
<sequence>MRASQWFLVTQKETPNDAEIASHQLMLRSGMIRKLGSGLYTWMPLGLRVLRKVENIVREEMNKTHAMELLMPSVQPAELWQETGRWETFGGQLLTMKDSNQREYCFGPTHEEVITDIMRNELQSYKQLPVNFYQIQTKFRDEIRPRFGVMRAREFIMKDAYSFHLSLESLQETYKDMYQAYCRIFDRMGLKYRAVEADTGAIGGSASHEFQVLAESGEDLIFYSDASDYAANIEQATSLKPPKANQACNETITLVDTPNQKTIDEVASFLGIASNQTIKTLIVKGKEHPMVALVLRGDDELNEVKATKHPLVHSPLSFIDEELILKTLKTPLGSIGPIQLNIPVIVDHHALAMPSFVCGANQADKHFINAAWERDAKYDDAYDLRNVKEGDQSPDGRGTLHCCRGIEVGHVFQLGDKYAKAMNASVINEQGQLQTMIMGCYGLGITRVVAAAIEQHHDEHGIIWPQALAPFQVNIIPLNGARSQTVKEQAESLYQQLKSHGIDVLLDDRNERAGVLFADNDLIGIPHRLVVSERNLEQGCIEYKSRTSSETQLINLDKVVNFIIELINK</sequence>
<organism>
    <name type="scientific">Legionella pneumophila (strain Paris)</name>
    <dbReference type="NCBI Taxonomy" id="297246"/>
    <lineage>
        <taxon>Bacteria</taxon>
        <taxon>Pseudomonadati</taxon>
        <taxon>Pseudomonadota</taxon>
        <taxon>Gammaproteobacteria</taxon>
        <taxon>Legionellales</taxon>
        <taxon>Legionellaceae</taxon>
        <taxon>Legionella</taxon>
    </lineage>
</organism>
<accession>Q5X756</accession>
<dbReference type="EC" id="6.1.1.15" evidence="1"/>
<dbReference type="EMBL" id="CR628336">
    <property type="protein sequence ID" value="CAH11897.1"/>
    <property type="molecule type" value="Genomic_DNA"/>
</dbReference>
<dbReference type="RefSeq" id="WP_011213277.1">
    <property type="nucleotide sequence ID" value="NC_006368.1"/>
</dbReference>
<dbReference type="SMR" id="Q5X756"/>
<dbReference type="KEGG" id="lpp:lpp0749"/>
<dbReference type="LegioList" id="lpp0749"/>
<dbReference type="HOGENOM" id="CLU_016739_0_0_6"/>
<dbReference type="GO" id="GO:0005829">
    <property type="term" value="C:cytosol"/>
    <property type="evidence" value="ECO:0007669"/>
    <property type="project" value="TreeGrafter"/>
</dbReference>
<dbReference type="GO" id="GO:0002161">
    <property type="term" value="F:aminoacyl-tRNA deacylase activity"/>
    <property type="evidence" value="ECO:0007669"/>
    <property type="project" value="InterPro"/>
</dbReference>
<dbReference type="GO" id="GO:0005524">
    <property type="term" value="F:ATP binding"/>
    <property type="evidence" value="ECO:0007669"/>
    <property type="project" value="UniProtKB-UniRule"/>
</dbReference>
<dbReference type="GO" id="GO:0004827">
    <property type="term" value="F:proline-tRNA ligase activity"/>
    <property type="evidence" value="ECO:0007669"/>
    <property type="project" value="UniProtKB-UniRule"/>
</dbReference>
<dbReference type="GO" id="GO:0006433">
    <property type="term" value="P:prolyl-tRNA aminoacylation"/>
    <property type="evidence" value="ECO:0007669"/>
    <property type="project" value="UniProtKB-UniRule"/>
</dbReference>
<dbReference type="CDD" id="cd04334">
    <property type="entry name" value="ProRS-INS"/>
    <property type="match status" value="1"/>
</dbReference>
<dbReference type="CDD" id="cd00861">
    <property type="entry name" value="ProRS_anticodon_short"/>
    <property type="match status" value="1"/>
</dbReference>
<dbReference type="CDD" id="cd00779">
    <property type="entry name" value="ProRS_core_prok"/>
    <property type="match status" value="1"/>
</dbReference>
<dbReference type="FunFam" id="3.30.930.10:FF:000043">
    <property type="entry name" value="Proline--tRNA ligase"/>
    <property type="match status" value="1"/>
</dbReference>
<dbReference type="Gene3D" id="3.40.50.800">
    <property type="entry name" value="Anticodon-binding domain"/>
    <property type="match status" value="1"/>
</dbReference>
<dbReference type="Gene3D" id="3.30.930.10">
    <property type="entry name" value="Bira Bifunctional Protein, Domain 2"/>
    <property type="match status" value="2"/>
</dbReference>
<dbReference type="HAMAP" id="MF_01569">
    <property type="entry name" value="Pro_tRNA_synth_type1"/>
    <property type="match status" value="1"/>
</dbReference>
<dbReference type="InterPro" id="IPR002314">
    <property type="entry name" value="aa-tRNA-synt_IIb"/>
</dbReference>
<dbReference type="InterPro" id="IPR006195">
    <property type="entry name" value="aa-tRNA-synth_II"/>
</dbReference>
<dbReference type="InterPro" id="IPR045864">
    <property type="entry name" value="aa-tRNA-synth_II/BPL/LPL"/>
</dbReference>
<dbReference type="InterPro" id="IPR004154">
    <property type="entry name" value="Anticodon-bd"/>
</dbReference>
<dbReference type="InterPro" id="IPR036621">
    <property type="entry name" value="Anticodon-bd_dom_sf"/>
</dbReference>
<dbReference type="InterPro" id="IPR002316">
    <property type="entry name" value="Pro-tRNA-ligase_IIa"/>
</dbReference>
<dbReference type="InterPro" id="IPR004500">
    <property type="entry name" value="Pro-tRNA-synth_IIa_bac-type"/>
</dbReference>
<dbReference type="InterPro" id="IPR023717">
    <property type="entry name" value="Pro-tRNA-Synthase_IIa_type1"/>
</dbReference>
<dbReference type="InterPro" id="IPR050062">
    <property type="entry name" value="Pro-tRNA_synthetase"/>
</dbReference>
<dbReference type="InterPro" id="IPR044140">
    <property type="entry name" value="ProRS_anticodon_short"/>
</dbReference>
<dbReference type="InterPro" id="IPR033730">
    <property type="entry name" value="ProRS_core_prok"/>
</dbReference>
<dbReference type="InterPro" id="IPR036754">
    <property type="entry name" value="YbaK/aa-tRNA-synt-asso_dom_sf"/>
</dbReference>
<dbReference type="InterPro" id="IPR007214">
    <property type="entry name" value="YbaK/aa-tRNA-synth-assoc-dom"/>
</dbReference>
<dbReference type="NCBIfam" id="NF006625">
    <property type="entry name" value="PRK09194.1"/>
    <property type="match status" value="1"/>
</dbReference>
<dbReference type="NCBIfam" id="TIGR00409">
    <property type="entry name" value="proS_fam_II"/>
    <property type="match status" value="1"/>
</dbReference>
<dbReference type="PANTHER" id="PTHR42753">
    <property type="entry name" value="MITOCHONDRIAL RIBOSOME PROTEIN L39/PROLYL-TRNA LIGASE FAMILY MEMBER"/>
    <property type="match status" value="1"/>
</dbReference>
<dbReference type="PANTHER" id="PTHR42753:SF2">
    <property type="entry name" value="PROLINE--TRNA LIGASE"/>
    <property type="match status" value="1"/>
</dbReference>
<dbReference type="Pfam" id="PF03129">
    <property type="entry name" value="HGTP_anticodon"/>
    <property type="match status" value="1"/>
</dbReference>
<dbReference type="Pfam" id="PF00587">
    <property type="entry name" value="tRNA-synt_2b"/>
    <property type="match status" value="1"/>
</dbReference>
<dbReference type="Pfam" id="PF04073">
    <property type="entry name" value="tRNA_edit"/>
    <property type="match status" value="1"/>
</dbReference>
<dbReference type="PIRSF" id="PIRSF001535">
    <property type="entry name" value="ProRS_1"/>
    <property type="match status" value="1"/>
</dbReference>
<dbReference type="PRINTS" id="PR01046">
    <property type="entry name" value="TRNASYNTHPRO"/>
</dbReference>
<dbReference type="SUPFAM" id="SSF52954">
    <property type="entry name" value="Class II aaRS ABD-related"/>
    <property type="match status" value="1"/>
</dbReference>
<dbReference type="SUPFAM" id="SSF55681">
    <property type="entry name" value="Class II aaRS and biotin synthetases"/>
    <property type="match status" value="1"/>
</dbReference>
<dbReference type="SUPFAM" id="SSF55826">
    <property type="entry name" value="YbaK/ProRS associated domain"/>
    <property type="match status" value="1"/>
</dbReference>
<dbReference type="PROSITE" id="PS50862">
    <property type="entry name" value="AA_TRNA_LIGASE_II"/>
    <property type="match status" value="1"/>
</dbReference>
<gene>
    <name evidence="1" type="primary">proS</name>
    <name type="ordered locus">lpp0749</name>
</gene>
<evidence type="ECO:0000255" key="1">
    <source>
        <dbReference type="HAMAP-Rule" id="MF_01569"/>
    </source>
</evidence>
<comment type="function">
    <text evidence="1">Catalyzes the attachment of proline to tRNA(Pro) in a two-step reaction: proline is first activated by ATP to form Pro-AMP and then transferred to the acceptor end of tRNA(Pro). As ProRS can inadvertently accommodate and process non-cognate amino acids such as alanine and cysteine, to avoid such errors it has two additional distinct editing activities against alanine. One activity is designated as 'pretransfer' editing and involves the tRNA(Pro)-independent hydrolysis of activated Ala-AMP. The other activity is designated 'posttransfer' editing and involves deacylation of mischarged Ala-tRNA(Pro). The misacylated Cys-tRNA(Pro) is not edited by ProRS.</text>
</comment>
<comment type="catalytic activity">
    <reaction evidence="1">
        <text>tRNA(Pro) + L-proline + ATP = L-prolyl-tRNA(Pro) + AMP + diphosphate</text>
        <dbReference type="Rhea" id="RHEA:14305"/>
        <dbReference type="Rhea" id="RHEA-COMP:9700"/>
        <dbReference type="Rhea" id="RHEA-COMP:9702"/>
        <dbReference type="ChEBI" id="CHEBI:30616"/>
        <dbReference type="ChEBI" id="CHEBI:33019"/>
        <dbReference type="ChEBI" id="CHEBI:60039"/>
        <dbReference type="ChEBI" id="CHEBI:78442"/>
        <dbReference type="ChEBI" id="CHEBI:78532"/>
        <dbReference type="ChEBI" id="CHEBI:456215"/>
        <dbReference type="EC" id="6.1.1.15"/>
    </reaction>
</comment>
<comment type="subunit">
    <text evidence="1">Homodimer.</text>
</comment>
<comment type="subcellular location">
    <subcellularLocation>
        <location evidence="1">Cytoplasm</location>
    </subcellularLocation>
</comment>
<comment type="domain">
    <text evidence="1">Consists of three domains: the N-terminal catalytic domain, the editing domain and the C-terminal anticodon-binding domain.</text>
</comment>
<comment type="similarity">
    <text evidence="1">Belongs to the class-II aminoacyl-tRNA synthetase family. ProS type 1 subfamily.</text>
</comment>
<protein>
    <recommendedName>
        <fullName evidence="1">Proline--tRNA ligase</fullName>
        <ecNumber evidence="1">6.1.1.15</ecNumber>
    </recommendedName>
    <alternativeName>
        <fullName evidence="1">Prolyl-tRNA synthetase</fullName>
        <shortName evidence="1">ProRS</shortName>
    </alternativeName>
</protein>